<reference key="1">
    <citation type="submission" date="2008-10" db="EMBL/GenBank/DDBJ databases">
        <title>Genome sequence of Bacillus anthracis str. CDC 684.</title>
        <authorList>
            <person name="Dodson R.J."/>
            <person name="Munk A.C."/>
            <person name="Brettin T."/>
            <person name="Bruce D."/>
            <person name="Detter C."/>
            <person name="Tapia R."/>
            <person name="Han C."/>
            <person name="Sutton G."/>
            <person name="Sims D."/>
        </authorList>
    </citation>
    <scope>NUCLEOTIDE SEQUENCE [LARGE SCALE GENOMIC DNA]</scope>
    <source>
        <strain>CDC 684 / NRRL 3495</strain>
    </source>
</reference>
<name>NAGB_BACAC</name>
<evidence type="ECO:0000255" key="1">
    <source>
        <dbReference type="HAMAP-Rule" id="MF_01241"/>
    </source>
</evidence>
<gene>
    <name evidence="1" type="primary">nagB</name>
    <name type="ordered locus">BAMEG_4314</name>
</gene>
<accession>C3LIR9</accession>
<feature type="chain" id="PRO_1000165010" description="Glucosamine-6-phosphate deaminase">
    <location>
        <begin position="1"/>
        <end position="262"/>
    </location>
</feature>
<feature type="active site" description="Proton acceptor; for enolization step" evidence="1">
    <location>
        <position position="63"/>
    </location>
</feature>
<feature type="active site" description="For ring-opening step" evidence="1">
    <location>
        <position position="129"/>
    </location>
</feature>
<feature type="active site" description="Proton acceptor; for ring-opening step" evidence="1">
    <location>
        <position position="131"/>
    </location>
</feature>
<feature type="active site" description="For ring-opening step" evidence="1">
    <location>
        <position position="136"/>
    </location>
</feature>
<proteinExistence type="inferred from homology"/>
<organism>
    <name type="scientific">Bacillus anthracis (strain CDC 684 / NRRL 3495)</name>
    <dbReference type="NCBI Taxonomy" id="568206"/>
    <lineage>
        <taxon>Bacteria</taxon>
        <taxon>Bacillati</taxon>
        <taxon>Bacillota</taxon>
        <taxon>Bacilli</taxon>
        <taxon>Bacillales</taxon>
        <taxon>Bacillaceae</taxon>
        <taxon>Bacillus</taxon>
        <taxon>Bacillus cereus group</taxon>
    </lineage>
</organism>
<comment type="function">
    <text evidence="1">Catalyzes the reversible isomerization-deamination of glucosamine 6-phosphate (GlcN6P) to form fructose 6-phosphate (Fru6P) and ammonium ion.</text>
</comment>
<comment type="catalytic activity">
    <reaction evidence="1">
        <text>alpha-D-glucosamine 6-phosphate + H2O = beta-D-fructose 6-phosphate + NH4(+)</text>
        <dbReference type="Rhea" id="RHEA:12172"/>
        <dbReference type="ChEBI" id="CHEBI:15377"/>
        <dbReference type="ChEBI" id="CHEBI:28938"/>
        <dbReference type="ChEBI" id="CHEBI:57634"/>
        <dbReference type="ChEBI" id="CHEBI:75989"/>
        <dbReference type="EC" id="3.5.99.6"/>
    </reaction>
</comment>
<comment type="pathway">
    <text evidence="1">Amino-sugar metabolism; N-acetylneuraminate degradation; D-fructose 6-phosphate from N-acetylneuraminate: step 5/5.</text>
</comment>
<comment type="similarity">
    <text evidence="1">Belongs to the glucosamine/galactosamine-6-phosphate isomerase family. NagB subfamily.</text>
</comment>
<sequence>MNILVVKTPEELAEAGYKLIEEVVKTKENPTLGMATGSSPLGIYAEMRKNKLDTSRVTTVNLDEYVNLPHEDKNSYHYFMQEQLFDHLPFKQTYVPNGMASDLEEECKRYEGILAANPVDLQILGIGENGHIGFNEPGTPFNSPTNIVELTESTRQANLRFFEKEEDVPTHAITMGIGSIMKAKQILLVAMGSKKAEAVKELLQGAYSEACPATVLQRHPNVTVIADQEALSLCSEAIADEHRQVFTISDLLSDSRVGETAN</sequence>
<dbReference type="EC" id="3.5.99.6" evidence="1"/>
<dbReference type="EMBL" id="CP001215">
    <property type="protein sequence ID" value="ACP12324.1"/>
    <property type="molecule type" value="Genomic_DNA"/>
</dbReference>
<dbReference type="RefSeq" id="WP_001024206.1">
    <property type="nucleotide sequence ID" value="NC_012581.1"/>
</dbReference>
<dbReference type="SMR" id="C3LIR9"/>
<dbReference type="GeneID" id="75087199"/>
<dbReference type="KEGG" id="bah:BAMEG_4314"/>
<dbReference type="HOGENOM" id="CLU_049611_1_0_9"/>
<dbReference type="UniPathway" id="UPA00629">
    <property type="reaction ID" value="UER00684"/>
</dbReference>
<dbReference type="GO" id="GO:0005737">
    <property type="term" value="C:cytoplasm"/>
    <property type="evidence" value="ECO:0007669"/>
    <property type="project" value="TreeGrafter"/>
</dbReference>
<dbReference type="GO" id="GO:0004342">
    <property type="term" value="F:glucosamine-6-phosphate deaminase activity"/>
    <property type="evidence" value="ECO:0007669"/>
    <property type="project" value="UniProtKB-UniRule"/>
</dbReference>
<dbReference type="GO" id="GO:0042802">
    <property type="term" value="F:identical protein binding"/>
    <property type="evidence" value="ECO:0007669"/>
    <property type="project" value="TreeGrafter"/>
</dbReference>
<dbReference type="GO" id="GO:0005975">
    <property type="term" value="P:carbohydrate metabolic process"/>
    <property type="evidence" value="ECO:0007669"/>
    <property type="project" value="InterPro"/>
</dbReference>
<dbReference type="GO" id="GO:0006043">
    <property type="term" value="P:glucosamine catabolic process"/>
    <property type="evidence" value="ECO:0007669"/>
    <property type="project" value="TreeGrafter"/>
</dbReference>
<dbReference type="GO" id="GO:0006046">
    <property type="term" value="P:N-acetylglucosamine catabolic process"/>
    <property type="evidence" value="ECO:0007669"/>
    <property type="project" value="TreeGrafter"/>
</dbReference>
<dbReference type="GO" id="GO:0019262">
    <property type="term" value="P:N-acetylneuraminate catabolic process"/>
    <property type="evidence" value="ECO:0007669"/>
    <property type="project" value="UniProtKB-UniRule"/>
</dbReference>
<dbReference type="CDD" id="cd01399">
    <property type="entry name" value="GlcN6P_deaminase"/>
    <property type="match status" value="1"/>
</dbReference>
<dbReference type="FunFam" id="3.40.50.1360:FF:000003">
    <property type="entry name" value="Glucosamine-6-phosphate deaminase"/>
    <property type="match status" value="1"/>
</dbReference>
<dbReference type="Gene3D" id="3.40.50.1360">
    <property type="match status" value="1"/>
</dbReference>
<dbReference type="HAMAP" id="MF_01241">
    <property type="entry name" value="GlcN6P_deamin"/>
    <property type="match status" value="1"/>
</dbReference>
<dbReference type="InterPro" id="IPR006148">
    <property type="entry name" value="Glc/Gal-6P_isomerase"/>
</dbReference>
<dbReference type="InterPro" id="IPR004547">
    <property type="entry name" value="Glucosamine6P_isomerase"/>
</dbReference>
<dbReference type="InterPro" id="IPR018321">
    <property type="entry name" value="Glucosamine6P_isomerase_CS"/>
</dbReference>
<dbReference type="InterPro" id="IPR037171">
    <property type="entry name" value="NagB/RpiA_transferase-like"/>
</dbReference>
<dbReference type="NCBIfam" id="TIGR00502">
    <property type="entry name" value="nagB"/>
    <property type="match status" value="1"/>
</dbReference>
<dbReference type="NCBIfam" id="NF001682">
    <property type="entry name" value="PRK00443.1-1"/>
    <property type="match status" value="1"/>
</dbReference>
<dbReference type="PANTHER" id="PTHR11280">
    <property type="entry name" value="GLUCOSAMINE-6-PHOSPHATE ISOMERASE"/>
    <property type="match status" value="1"/>
</dbReference>
<dbReference type="PANTHER" id="PTHR11280:SF5">
    <property type="entry name" value="GLUCOSAMINE-6-PHOSPHATE ISOMERASE"/>
    <property type="match status" value="1"/>
</dbReference>
<dbReference type="Pfam" id="PF01182">
    <property type="entry name" value="Glucosamine_iso"/>
    <property type="match status" value="1"/>
</dbReference>
<dbReference type="SUPFAM" id="SSF100950">
    <property type="entry name" value="NagB/RpiA/CoA transferase-like"/>
    <property type="match status" value="1"/>
</dbReference>
<dbReference type="PROSITE" id="PS01161">
    <property type="entry name" value="GLC_GALNAC_ISOMERASE"/>
    <property type="match status" value="1"/>
</dbReference>
<protein>
    <recommendedName>
        <fullName evidence="1">Glucosamine-6-phosphate deaminase</fullName>
        <ecNumber evidence="1">3.5.99.6</ecNumber>
    </recommendedName>
    <alternativeName>
        <fullName evidence="1">GlcN6P deaminase</fullName>
        <shortName evidence="1">GNPDA</shortName>
    </alternativeName>
    <alternativeName>
        <fullName evidence="1">Glucosamine-6-phosphate isomerase</fullName>
    </alternativeName>
</protein>
<keyword id="KW-0119">Carbohydrate metabolism</keyword>
<keyword id="KW-0378">Hydrolase</keyword>